<accession>P21428</accession>
<accession>Q540D2</accession>
<name>PB2_I60A0</name>
<proteinExistence type="inferred from homology"/>
<protein>
    <recommendedName>
        <fullName evidence="1">Polymerase basic protein 2</fullName>
    </recommendedName>
    <alternativeName>
        <fullName evidence="1">RNA-directed RNA polymerase subunit P3</fullName>
    </alternativeName>
</protein>
<reference key="1">
    <citation type="journal article" date="1988" name="Virology">
        <title>Identification of sequence changes in the cold-adapted, live attenuated influenza vaccine strain, A/Ann Arbor/6/60 (H2N2).</title>
        <authorList>
            <person name="Cox N.J."/>
            <person name="Kitame F."/>
            <person name="Kendal A.P."/>
            <person name="Maassab H.F."/>
            <person name="Naeve C."/>
        </authorList>
    </citation>
    <scope>NUCLEOTIDE SEQUENCE [GENOMIC RNA]</scope>
</reference>
<reference key="2">
    <citation type="journal article" date="2004" name="Virology">
        <title>Genetic analysis of human H2N2 and early H3N2 influenza viruses, 1957-1972: evidence for genetic divergence and multiple reassortment events.</title>
        <authorList>
            <person name="Lindstrom S.E."/>
            <person name="Cox N.J."/>
            <person name="Klimov A."/>
        </authorList>
    </citation>
    <scope>NUCLEOTIDE SEQUENCE [GENOMIC RNA]</scope>
</reference>
<keyword id="KW-1157">Cap snatching</keyword>
<keyword id="KW-1262">Eukaryotic host gene expression shutoff by virus</keyword>
<keyword id="KW-1191">Eukaryotic host transcription shutoff by virus</keyword>
<keyword id="KW-1190">Host gene expression shutoff by virus</keyword>
<keyword id="KW-1045">Host mitochondrion</keyword>
<keyword id="KW-1048">Host nucleus</keyword>
<keyword id="KW-0945">Host-virus interaction</keyword>
<keyword id="KW-1090">Inhibition of host innate immune response by virus</keyword>
<keyword id="KW-1097">Inhibition of host MAVS by virus</keyword>
<keyword id="KW-1113">Inhibition of host RLR pathway by virus</keyword>
<keyword id="KW-1104">Inhibition of host RNA polymerase II by virus</keyword>
<keyword id="KW-0506">mRNA capping</keyword>
<keyword id="KW-0507">mRNA processing</keyword>
<keyword id="KW-0899">Viral immunoevasion</keyword>
<keyword id="KW-1195">Viral transcription</keyword>
<keyword id="KW-0946">Virion</keyword>
<organismHost>
    <name type="scientific">Aves</name>
    <dbReference type="NCBI Taxonomy" id="8782"/>
</organismHost>
<organismHost>
    <name type="scientific">Homo sapiens</name>
    <name type="common">Human</name>
    <dbReference type="NCBI Taxonomy" id="9606"/>
</organismHost>
<evidence type="ECO:0000255" key="1">
    <source>
        <dbReference type="HAMAP-Rule" id="MF_04062"/>
    </source>
</evidence>
<gene>
    <name evidence="1" type="primary">PB2</name>
</gene>
<dbReference type="EMBL" id="M23970">
    <property type="protein sequence ID" value="AAA43648.1"/>
    <property type="molecule type" value="Genomic_RNA"/>
</dbReference>
<dbReference type="EMBL" id="AY209938">
    <property type="protein sequence ID" value="AAO46254.1"/>
    <property type="molecule type" value="Genomic_RNA"/>
</dbReference>
<dbReference type="SMR" id="P21428"/>
<dbReference type="GO" id="GO:0033650">
    <property type="term" value="C:host cell mitochondrion"/>
    <property type="evidence" value="ECO:0007669"/>
    <property type="project" value="UniProtKB-SubCell"/>
</dbReference>
<dbReference type="GO" id="GO:0042025">
    <property type="term" value="C:host cell nucleus"/>
    <property type="evidence" value="ECO:0007669"/>
    <property type="project" value="UniProtKB-SubCell"/>
</dbReference>
<dbReference type="GO" id="GO:0044423">
    <property type="term" value="C:virion component"/>
    <property type="evidence" value="ECO:0007669"/>
    <property type="project" value="UniProtKB-UniRule"/>
</dbReference>
<dbReference type="GO" id="GO:0003723">
    <property type="term" value="F:RNA binding"/>
    <property type="evidence" value="ECO:0007669"/>
    <property type="project" value="UniProtKB-UniRule"/>
</dbReference>
<dbReference type="GO" id="GO:0003968">
    <property type="term" value="F:RNA-directed RNA polymerase activity"/>
    <property type="evidence" value="ECO:0007669"/>
    <property type="project" value="UniProtKB-UniRule"/>
</dbReference>
<dbReference type="GO" id="GO:0006370">
    <property type="term" value="P:7-methylguanosine mRNA capping"/>
    <property type="evidence" value="ECO:0007669"/>
    <property type="project" value="UniProtKB-UniRule"/>
</dbReference>
<dbReference type="GO" id="GO:0075526">
    <property type="term" value="P:cap snatching"/>
    <property type="evidence" value="ECO:0007669"/>
    <property type="project" value="UniProtKB-UniRule"/>
</dbReference>
<dbReference type="GO" id="GO:0006351">
    <property type="term" value="P:DNA-templated transcription"/>
    <property type="evidence" value="ECO:0007669"/>
    <property type="project" value="UniProtKB-UniRule"/>
</dbReference>
<dbReference type="GO" id="GO:0039545">
    <property type="term" value="P:symbiont-mediated suppression of host cytoplasmic pattern recognition receptor signaling pathway via inhibition of MAVS activity"/>
    <property type="evidence" value="ECO:0007669"/>
    <property type="project" value="UniProtKB-UniRule"/>
</dbReference>
<dbReference type="GO" id="GO:0039657">
    <property type="term" value="P:symbiont-mediated suppression of host gene expression"/>
    <property type="evidence" value="ECO:0007669"/>
    <property type="project" value="UniProtKB-KW"/>
</dbReference>
<dbReference type="GO" id="GO:0039523">
    <property type="term" value="P:symbiont-mediated suppression of host mRNA transcription via inhibition of RNA polymerase II activity"/>
    <property type="evidence" value="ECO:0007669"/>
    <property type="project" value="UniProtKB-UniRule"/>
</dbReference>
<dbReference type="GO" id="GO:0039694">
    <property type="term" value="P:viral RNA genome replication"/>
    <property type="evidence" value="ECO:0007669"/>
    <property type="project" value="InterPro"/>
</dbReference>
<dbReference type="FunFam" id="3.30.30.90:FF:000001">
    <property type="entry name" value="Polymerase basic protein 2"/>
    <property type="match status" value="1"/>
</dbReference>
<dbReference type="Gene3D" id="3.30.30.90">
    <property type="entry name" value="Polymerase Basic Protein 2, C-terminal domain"/>
    <property type="match status" value="1"/>
</dbReference>
<dbReference type="HAMAP" id="MF_04062">
    <property type="entry name" value="INV_PB2"/>
    <property type="match status" value="1"/>
</dbReference>
<dbReference type="InterPro" id="IPR049110">
    <property type="entry name" value="Flu_PB2_2nd"/>
</dbReference>
<dbReference type="InterPro" id="IPR049114">
    <property type="entry name" value="Flu_PB2_6th"/>
</dbReference>
<dbReference type="InterPro" id="IPR049115">
    <property type="entry name" value="Flu_PB2_C"/>
</dbReference>
<dbReference type="InterPro" id="IPR048298">
    <property type="entry name" value="Flu_PB2_CAP-bd"/>
</dbReference>
<dbReference type="InterPro" id="IPR049111">
    <property type="entry name" value="Flu_PB2_middle"/>
</dbReference>
<dbReference type="InterPro" id="IPR049106">
    <property type="entry name" value="Flu_PB2_N"/>
</dbReference>
<dbReference type="InterPro" id="IPR001591">
    <property type="entry name" value="INV_PB2"/>
</dbReference>
<dbReference type="InterPro" id="IPR049113">
    <property type="entry name" value="PB2_helical"/>
</dbReference>
<dbReference type="InterPro" id="IPR037258">
    <property type="entry name" value="PDB2_C"/>
</dbReference>
<dbReference type="Pfam" id="PF20947">
    <property type="entry name" value="Flu_PB2_1st"/>
    <property type="match status" value="1"/>
</dbReference>
<dbReference type="Pfam" id="PF20948">
    <property type="entry name" value="Flu_PB2_2nd"/>
    <property type="match status" value="1"/>
</dbReference>
<dbReference type="Pfam" id="PF20949">
    <property type="entry name" value="Flu_PB2_3rd"/>
    <property type="match status" value="1"/>
</dbReference>
<dbReference type="Pfam" id="PF20950">
    <property type="entry name" value="Flu_PB2_4th"/>
    <property type="match status" value="1"/>
</dbReference>
<dbReference type="Pfam" id="PF00604">
    <property type="entry name" value="Flu_PB2_5th"/>
    <property type="match status" value="1"/>
</dbReference>
<dbReference type="Pfam" id="PF20951">
    <property type="entry name" value="Flu_PB2_6th"/>
    <property type="match status" value="1"/>
</dbReference>
<dbReference type="Pfam" id="PF20952">
    <property type="entry name" value="Flu_PB2_7th"/>
    <property type="match status" value="1"/>
</dbReference>
<dbReference type="SUPFAM" id="SSF160453">
    <property type="entry name" value="PB2 C-terminal domain-like"/>
    <property type="match status" value="1"/>
</dbReference>
<sequence length="759" mass="86087">MERIKELRNLMSQSRTREILTKTTVDHMAIIKKYTSGRQEKNPSLRMKWMMAMKYPITADKRITEMIPERNEQGQTLWSKMSDAGSDRVMVSPLAVTWWNRNGPMTSTVHYPKIYKTYFEKVERLKHGTFGPVHFRNQVKIRRRVDINPGHADLSAKEAQDVIMEVVFPNEVGARILTSESQLTITKEKKEELQDCKISPLMVAYMLERELVRKTRFLPVAGGTSSVYIEVLHLTQGTCWEQMYTPGGEVRNDDVDQSLIIAARNIVRRAAVSADPLASLLEMCHSTQIGGTRMVDILRQNPTEEQAVEICKAAMGLRISSSFSFGGFTFKRTSGSSVKREEEVLTGNLQTLKIRVHEGYEEFTMVGKRATAILRKATRRLIQLIVSGRDEQSIAEAIIVAMVFSQEDCMIKAVRGDLNFVNRANQRLNPMHQLLRHFQKDAKVLFQNWGIEHIDNVMGMIGVLPDMTPSTEMSMRGVRVSKMGVDEYSSAERVVVSIDRFLRVRDQRGNVLLSPEEVSETQGTEKLTITYSSSMMWEINGPESVLVNTYQWIIRNWETVKIQWSQNPTMLYNKMEFEPFQSLVPKAIRGQYSGFVRTLFQQMRDVLGTFDTTQIIKLLPFAAAPPKQSRMQFSSLTVNVRGSGMRILVRGNSPIFNYNKTTKRLTILGKDAGTLTEDPDEGTSGVESAVLRGFLILGKEDRRYGPALSINELSNLAKGEKANVLIGQGDVVLVMKRKRNSSILTDSQTATKRIRMAIN</sequence>
<organism>
    <name type="scientific">Influenza A virus (strain A/Ann Arbor/6/1960 H2N2)</name>
    <dbReference type="NCBI Taxonomy" id="384498"/>
    <lineage>
        <taxon>Viruses</taxon>
        <taxon>Riboviria</taxon>
        <taxon>Orthornavirae</taxon>
        <taxon>Negarnaviricota</taxon>
        <taxon>Polyploviricotina</taxon>
        <taxon>Insthoviricetes</taxon>
        <taxon>Articulavirales</taxon>
        <taxon>Orthomyxoviridae</taxon>
        <taxon>Alphainfluenzavirus</taxon>
        <taxon>Alphainfluenzavirus influenzae</taxon>
        <taxon>Influenza A virus</taxon>
    </lineage>
</organism>
<feature type="chain" id="PRO_0000078812" description="Polymerase basic protein 2">
    <location>
        <begin position="1"/>
        <end position="759"/>
    </location>
</feature>
<feature type="short sequence motif" description="Nuclear localization signal" evidence="1">
    <location>
        <begin position="736"/>
        <end position="739"/>
    </location>
</feature>
<feature type="site" description="Mammalian adaptation" evidence="1">
    <location>
        <position position="627"/>
    </location>
</feature>
<comment type="function">
    <text evidence="1">Plays an essential role in transcription initiation and cap-stealing mechanism, in which cellular capped pre-mRNAs are used to generate primers for viral transcription. Recognizes and binds the 7-methylguanosine-containing cap of the target pre-RNA which is subsequently cleaved after 10-13 nucleotides by the viral protein PA. Plays a role in the initiation of the viral genome replication and modulates the activity of the ribonucleoprotein (RNP) complex. In addition, participates in the inhibition of type I interferon induction through interaction with and inhibition of the host mitochondrial antiviral signaling protein MAVS.</text>
</comment>
<comment type="subunit">
    <text evidence="1">Influenza RNA polymerase is composed of three subunits: PB1, PB2 and PA. Interacts (via N-terminus) with PB1 (via C-terminus). Interacts with nucleoprotein NP (via N-terminus). Interacts (via N-terminus) with host MAVS (via N-terminus); this interaction inhibits host innate immune response.</text>
</comment>
<comment type="subcellular location">
    <subcellularLocation>
        <location evidence="1">Virion</location>
    </subcellularLocation>
    <subcellularLocation>
        <location evidence="1">Host nucleus</location>
    </subcellularLocation>
    <subcellularLocation>
        <location evidence="1">Host mitochondrion</location>
    </subcellularLocation>
</comment>
<comment type="similarity">
    <text evidence="1">Belongs to the influenza viruses PB2 family.</text>
</comment>